<comment type="similarity">
    <text evidence="1">Belongs to the LarC family.</text>
</comment>
<protein>
    <recommendedName>
        <fullName evidence="1">Putative nickel insertion protein</fullName>
    </recommendedName>
</protein>
<keyword id="KW-0533">Nickel</keyword>
<keyword id="KW-1185">Reference proteome</keyword>
<organism>
    <name type="scientific">Methanosphaera stadtmanae (strain ATCC 43021 / DSM 3091 / JCM 11832 / MCB-3)</name>
    <dbReference type="NCBI Taxonomy" id="339860"/>
    <lineage>
        <taxon>Archaea</taxon>
        <taxon>Methanobacteriati</taxon>
        <taxon>Methanobacteriota</taxon>
        <taxon>Methanomada group</taxon>
        <taxon>Methanobacteria</taxon>
        <taxon>Methanobacteriales</taxon>
        <taxon>Methanobacteriaceae</taxon>
        <taxon>Methanosphaera</taxon>
    </lineage>
</organism>
<name>Y1170_METST</name>
<feature type="chain" id="PRO_1000064652" description="Putative nickel insertion protein">
    <location>
        <begin position="1"/>
        <end position="406"/>
    </location>
</feature>
<dbReference type="EMBL" id="CP000102">
    <property type="protein sequence ID" value="ABC57551.1"/>
    <property type="molecule type" value="Genomic_DNA"/>
</dbReference>
<dbReference type="SMR" id="Q2NF52"/>
<dbReference type="STRING" id="339860.Msp_1170"/>
<dbReference type="KEGG" id="mst:Msp_1170"/>
<dbReference type="eggNOG" id="arCOG02701">
    <property type="taxonomic scope" value="Archaea"/>
</dbReference>
<dbReference type="HOGENOM" id="CLU_028523_2_1_2"/>
<dbReference type="OrthoDB" id="10691at2157"/>
<dbReference type="Proteomes" id="UP000001931">
    <property type="component" value="Chromosome"/>
</dbReference>
<dbReference type="GO" id="GO:0016829">
    <property type="term" value="F:lyase activity"/>
    <property type="evidence" value="ECO:0007669"/>
    <property type="project" value="UniProtKB-UniRule"/>
</dbReference>
<dbReference type="GO" id="GO:0016151">
    <property type="term" value="F:nickel cation binding"/>
    <property type="evidence" value="ECO:0007669"/>
    <property type="project" value="UniProtKB-UniRule"/>
</dbReference>
<dbReference type="Gene3D" id="3.10.20.300">
    <property type="entry name" value="mk0293 like domain"/>
    <property type="match status" value="1"/>
</dbReference>
<dbReference type="Gene3D" id="3.30.70.1380">
    <property type="entry name" value="Transcriptional regulatory protein pf0864 domain like"/>
    <property type="match status" value="1"/>
</dbReference>
<dbReference type="HAMAP" id="MF_01074">
    <property type="entry name" value="LarC"/>
    <property type="match status" value="1"/>
</dbReference>
<dbReference type="InterPro" id="IPR002822">
    <property type="entry name" value="Ni_insertion"/>
</dbReference>
<dbReference type="NCBIfam" id="TIGR00299">
    <property type="entry name" value="nickel pincer cofactor biosynthesis protein LarC"/>
    <property type="match status" value="1"/>
</dbReference>
<dbReference type="PANTHER" id="PTHR36566">
    <property type="entry name" value="NICKEL INSERTION PROTEIN-RELATED"/>
    <property type="match status" value="1"/>
</dbReference>
<dbReference type="PANTHER" id="PTHR36566:SF1">
    <property type="entry name" value="PYRIDINIUM-3,5-BISTHIOCARBOXYLIC ACID MONONUCLEOTIDE NICKEL INSERTION PROTEIN"/>
    <property type="match status" value="1"/>
</dbReference>
<dbReference type="Pfam" id="PF01969">
    <property type="entry name" value="Ni_insertion"/>
    <property type="match status" value="1"/>
</dbReference>
<gene>
    <name type="ordered locus">Msp_1170</name>
</gene>
<accession>Q2NF52</accession>
<proteinExistence type="inferred from homology"/>
<evidence type="ECO:0000255" key="1">
    <source>
        <dbReference type="HAMAP-Rule" id="MF_01074"/>
    </source>
</evidence>
<reference key="1">
    <citation type="journal article" date="2006" name="J. Bacteriol.">
        <title>The genome sequence of Methanosphaera stadtmanae reveals why this human intestinal archaeon is restricted to methanol and H2 for methane formation and ATP synthesis.</title>
        <authorList>
            <person name="Fricke W.F."/>
            <person name="Seedorf H."/>
            <person name="Henne A."/>
            <person name="Kruer M."/>
            <person name="Liesegang H."/>
            <person name="Hedderich R."/>
            <person name="Gottschalk G."/>
            <person name="Thauer R.K."/>
        </authorList>
    </citation>
    <scope>NUCLEOTIDE SEQUENCE [LARGE SCALE GENOMIC DNA]</scope>
    <source>
        <strain>ATCC 43021 / DSM 3091 / JCM 11832 / MCB-3</strain>
    </source>
</reference>
<sequence length="406" mass="44865">MVLIIDGQTSGLAGNMFIGAFIDLGANKDDIINVIKTYANEFGDIDITITKQPKSGIMCTYAQINTTDKSTRHYNEIIEKLDDITQKHYPDNEIILKTINLSKKIFKTLAIAESKVHGKSLDQLHFHEVGCADAVADIIGSSYAYYLLNLDKEKVYSLPVATGSGTVKTQHGILPVPAPAVLNILKNVPTIGGCVNTEICTPTGCAILVNITDEYVSSYPYVTRKTIGYGAGKKDLEVLNALRLVHANSVTKNDTVTILETNIDTLSGEVLGSLYDKLLSEGARDVTITPTIMKKNRPGQIIKVICRNNDAQHITNVLMEETGTLGVRVIPTVHRGVAIRENIHEKININGTWEDVRFKIGYINDKIIKCTPEYDDIKKIANKTSIPIKDLIKYVEMEYRINNRGD</sequence>